<dbReference type="EMBL" id="CP000742">
    <property type="protein sequence ID" value="ABR55054.1"/>
    <property type="molecule type" value="Genomic_DNA"/>
</dbReference>
<dbReference type="RefSeq" id="WP_012065969.1">
    <property type="nucleotide sequence ID" value="NC_009634.1"/>
</dbReference>
<dbReference type="SMR" id="A6URD2"/>
<dbReference type="STRING" id="406327.Mevan_1156"/>
<dbReference type="GeneID" id="5325716"/>
<dbReference type="KEGG" id="mvn:Mevan_1156"/>
<dbReference type="eggNOG" id="arCOG04049">
    <property type="taxonomic scope" value="Archaea"/>
</dbReference>
<dbReference type="HOGENOM" id="CLU_205640_0_0_2"/>
<dbReference type="OrthoDB" id="45138at2157"/>
<dbReference type="Proteomes" id="UP000001107">
    <property type="component" value="Chromosome"/>
</dbReference>
<dbReference type="GO" id="GO:1990904">
    <property type="term" value="C:ribonucleoprotein complex"/>
    <property type="evidence" value="ECO:0007669"/>
    <property type="project" value="UniProtKB-KW"/>
</dbReference>
<dbReference type="GO" id="GO:0005840">
    <property type="term" value="C:ribosome"/>
    <property type="evidence" value="ECO:0007669"/>
    <property type="project" value="UniProtKB-KW"/>
</dbReference>
<dbReference type="GO" id="GO:0003735">
    <property type="term" value="F:structural constituent of ribosome"/>
    <property type="evidence" value="ECO:0007669"/>
    <property type="project" value="InterPro"/>
</dbReference>
<dbReference type="GO" id="GO:0006412">
    <property type="term" value="P:translation"/>
    <property type="evidence" value="ECO:0007669"/>
    <property type="project" value="UniProtKB-UniRule"/>
</dbReference>
<dbReference type="Gene3D" id="4.10.1060.50">
    <property type="match status" value="1"/>
</dbReference>
<dbReference type="HAMAP" id="MF_00788">
    <property type="entry name" value="Ribosomal_eL40"/>
    <property type="match status" value="1"/>
</dbReference>
<dbReference type="InterPro" id="IPR023657">
    <property type="entry name" value="Ribosomal_eL40_arc"/>
</dbReference>
<dbReference type="InterPro" id="IPR001975">
    <property type="entry name" value="Ribosomal_eL40_dom"/>
</dbReference>
<dbReference type="InterPro" id="IPR038587">
    <property type="entry name" value="Ribosomal_eL40_sf"/>
</dbReference>
<dbReference type="InterPro" id="IPR011332">
    <property type="entry name" value="Ribosomal_zn-bd"/>
</dbReference>
<dbReference type="NCBIfam" id="NF003161">
    <property type="entry name" value="PRK04136.1"/>
    <property type="match status" value="1"/>
</dbReference>
<dbReference type="PANTHER" id="PTHR39649">
    <property type="entry name" value="50S RIBOSOMAL PROTEIN L40E"/>
    <property type="match status" value="1"/>
</dbReference>
<dbReference type="PANTHER" id="PTHR39649:SF1">
    <property type="entry name" value="LARGE RIBOSOMAL SUBUNIT PROTEIN EL40"/>
    <property type="match status" value="1"/>
</dbReference>
<dbReference type="Pfam" id="PF01020">
    <property type="entry name" value="Ribosomal_L40e"/>
    <property type="match status" value="1"/>
</dbReference>
<dbReference type="SMART" id="SM01377">
    <property type="entry name" value="Ribosomal_L40e"/>
    <property type="match status" value="1"/>
</dbReference>
<dbReference type="SUPFAM" id="SSF57829">
    <property type="entry name" value="Zn-binding ribosomal proteins"/>
    <property type="match status" value="1"/>
</dbReference>
<feature type="chain" id="PRO_1000046890" description="Large ribosomal subunit protein eL40">
    <location>
        <begin position="1"/>
        <end position="47"/>
    </location>
</feature>
<proteinExistence type="inferred from homology"/>
<sequence length="47" mass="5554">MAFEEAIKRVFMKRICMKCNARNSWKAEKCRKCGYSNLRPKAKEARA</sequence>
<organism>
    <name type="scientific">Methanococcus vannielii (strain ATCC 35089 / DSM 1224 / JCM 13029 / OCM 148 / SB)</name>
    <dbReference type="NCBI Taxonomy" id="406327"/>
    <lineage>
        <taxon>Archaea</taxon>
        <taxon>Methanobacteriati</taxon>
        <taxon>Methanobacteriota</taxon>
        <taxon>Methanomada group</taxon>
        <taxon>Methanococci</taxon>
        <taxon>Methanococcales</taxon>
        <taxon>Methanococcaceae</taxon>
        <taxon>Methanococcus</taxon>
    </lineage>
</organism>
<evidence type="ECO:0000255" key="1">
    <source>
        <dbReference type="HAMAP-Rule" id="MF_00788"/>
    </source>
</evidence>
<evidence type="ECO:0000305" key="2"/>
<keyword id="KW-0687">Ribonucleoprotein</keyword>
<keyword id="KW-0689">Ribosomal protein</keyword>
<comment type="similarity">
    <text evidence="1">Belongs to the eukaryotic ribosomal protein eL40 family.</text>
</comment>
<protein>
    <recommendedName>
        <fullName evidence="1">Large ribosomal subunit protein eL40</fullName>
    </recommendedName>
    <alternativeName>
        <fullName evidence="2">50S ribosomal protein L40e</fullName>
    </alternativeName>
</protein>
<reference key="1">
    <citation type="submission" date="2007-06" db="EMBL/GenBank/DDBJ databases">
        <title>Complete sequence of Methanococcus vannielii SB.</title>
        <authorList>
            <consortium name="US DOE Joint Genome Institute"/>
            <person name="Copeland A."/>
            <person name="Lucas S."/>
            <person name="Lapidus A."/>
            <person name="Barry K."/>
            <person name="Glavina del Rio T."/>
            <person name="Dalin E."/>
            <person name="Tice H."/>
            <person name="Pitluck S."/>
            <person name="Chain P."/>
            <person name="Malfatti S."/>
            <person name="Shin M."/>
            <person name="Vergez L."/>
            <person name="Schmutz J."/>
            <person name="Larimer F."/>
            <person name="Land M."/>
            <person name="Hauser L."/>
            <person name="Kyrpides N."/>
            <person name="Anderson I."/>
            <person name="Sieprawska-Lupa M."/>
            <person name="Whitman W.B."/>
            <person name="Richardson P."/>
        </authorList>
    </citation>
    <scope>NUCLEOTIDE SEQUENCE [LARGE SCALE GENOMIC DNA]</scope>
    <source>
        <strain>ATCC 35089 / DSM 1224 / JCM 13029 / OCM 148 / SB</strain>
    </source>
</reference>
<name>RL40_METVS</name>
<accession>A6URD2</accession>
<gene>
    <name evidence="1" type="primary">rpl40e</name>
    <name type="ordered locus">Mevan_1156</name>
</gene>